<evidence type="ECO:0000255" key="1"/>
<evidence type="ECO:0000269" key="2">
    <source>
    </source>
</evidence>
<evidence type="ECO:0000305" key="3"/>
<dbReference type="EMBL" id="U00096">
    <property type="protein sequence ID" value="AAC74535.2"/>
    <property type="molecule type" value="Genomic_DNA"/>
</dbReference>
<dbReference type="EMBL" id="AP009048">
    <property type="protein sequence ID" value="BAA15086.2"/>
    <property type="molecule type" value="Genomic_DNA"/>
</dbReference>
<dbReference type="RefSeq" id="NP_415970.4">
    <property type="nucleotide sequence ID" value="NC_000913.3"/>
</dbReference>
<dbReference type="RefSeq" id="WP_001300590.1">
    <property type="nucleotide sequence ID" value="NZ_SSZK01000021.1"/>
</dbReference>
<dbReference type="SMR" id="P77610"/>
<dbReference type="BioGRID" id="4260199">
    <property type="interactions" value="9"/>
</dbReference>
<dbReference type="FunCoup" id="P77610">
    <property type="interactions" value="203"/>
</dbReference>
<dbReference type="STRING" id="511145.b1453"/>
<dbReference type="TCDB" id="2.A.3.1.24">
    <property type="family name" value="the amino acid-polyamine-organocation (apc) family"/>
</dbReference>
<dbReference type="PaxDb" id="511145-b1453"/>
<dbReference type="EnsemblBacteria" id="AAC74535">
    <property type="protein sequence ID" value="AAC74535"/>
    <property type="gene ID" value="b1453"/>
</dbReference>
<dbReference type="GeneID" id="75171535"/>
<dbReference type="GeneID" id="946019"/>
<dbReference type="KEGG" id="ecj:JW5234"/>
<dbReference type="KEGG" id="eco:b1453"/>
<dbReference type="KEGG" id="ecoc:C3026_08450"/>
<dbReference type="PATRIC" id="fig|1411691.4.peg.815"/>
<dbReference type="EchoBASE" id="EB3538"/>
<dbReference type="eggNOG" id="COG1113">
    <property type="taxonomic scope" value="Bacteria"/>
</dbReference>
<dbReference type="HOGENOM" id="CLU_007946_9_0_6"/>
<dbReference type="InParanoid" id="P77610"/>
<dbReference type="OMA" id="ELPWHNR"/>
<dbReference type="OrthoDB" id="5297508at2"/>
<dbReference type="PhylomeDB" id="P77610"/>
<dbReference type="BioCyc" id="EcoCyc:ANSP-MONOMER"/>
<dbReference type="PRO" id="PR:P77610"/>
<dbReference type="Proteomes" id="UP000000625">
    <property type="component" value="Chromosome"/>
</dbReference>
<dbReference type="GO" id="GO:0005886">
    <property type="term" value="C:plasma membrane"/>
    <property type="evidence" value="ECO:0000314"/>
    <property type="project" value="EcoCyc"/>
</dbReference>
<dbReference type="GO" id="GO:0006865">
    <property type="term" value="P:amino acid transport"/>
    <property type="evidence" value="ECO:0007669"/>
    <property type="project" value="UniProtKB-KW"/>
</dbReference>
<dbReference type="GO" id="GO:0055085">
    <property type="term" value="P:transmembrane transport"/>
    <property type="evidence" value="ECO:0007669"/>
    <property type="project" value="InterPro"/>
</dbReference>
<dbReference type="FunFam" id="1.20.1740.10:FF:000001">
    <property type="entry name" value="Amino acid permease"/>
    <property type="match status" value="1"/>
</dbReference>
<dbReference type="Gene3D" id="1.20.1740.10">
    <property type="entry name" value="Amino acid/polyamine transporter I"/>
    <property type="match status" value="1"/>
</dbReference>
<dbReference type="InterPro" id="IPR004841">
    <property type="entry name" value="AA-permease/SLC12A_dom"/>
</dbReference>
<dbReference type="InterPro" id="IPR004840">
    <property type="entry name" value="Amino_acid_permease_CS"/>
</dbReference>
<dbReference type="NCBIfam" id="NF011623">
    <property type="entry name" value="PRK15049.1"/>
    <property type="match status" value="1"/>
</dbReference>
<dbReference type="PANTHER" id="PTHR43495">
    <property type="entry name" value="GABA PERMEASE"/>
    <property type="match status" value="1"/>
</dbReference>
<dbReference type="PANTHER" id="PTHR43495:SF1">
    <property type="entry name" value="L-ASPARAGINE PERMEASE"/>
    <property type="match status" value="1"/>
</dbReference>
<dbReference type="Pfam" id="PF00324">
    <property type="entry name" value="AA_permease"/>
    <property type="match status" value="1"/>
</dbReference>
<dbReference type="PIRSF" id="PIRSF006060">
    <property type="entry name" value="AA_transporter"/>
    <property type="match status" value="1"/>
</dbReference>
<dbReference type="PROSITE" id="PS00218">
    <property type="entry name" value="AMINO_ACID_PERMEASE_1"/>
    <property type="match status" value="1"/>
</dbReference>
<gene>
    <name type="primary">ansP</name>
    <name type="synonym">yncF</name>
    <name type="ordered locus">b1453</name>
    <name type="ordered locus">JW5234</name>
</gene>
<accession>P77610</accession>
<feature type="chain" id="PRO_0000054185" description="L-asparagine permease">
    <location>
        <begin position="1"/>
        <end position="499"/>
    </location>
</feature>
<feature type="transmembrane region" description="Helical" evidence="1">
    <location>
        <begin position="34"/>
        <end position="54"/>
    </location>
</feature>
<feature type="transmembrane region" description="Helical" evidence="1">
    <location>
        <begin position="58"/>
        <end position="78"/>
    </location>
</feature>
<feature type="transmembrane region" description="Helical" evidence="1">
    <location>
        <begin position="109"/>
        <end position="129"/>
    </location>
</feature>
<feature type="transmembrane region" description="Helical" evidence="1">
    <location>
        <begin position="146"/>
        <end position="166"/>
    </location>
</feature>
<feature type="transmembrane region" description="Helical" evidence="1">
    <location>
        <begin position="171"/>
        <end position="191"/>
    </location>
</feature>
<feature type="transmembrane region" description="Helical" evidence="1">
    <location>
        <begin position="219"/>
        <end position="239"/>
    </location>
</feature>
<feature type="transmembrane region" description="Helical" evidence="1">
    <location>
        <begin position="264"/>
        <end position="284"/>
    </location>
</feature>
<feature type="transmembrane region" description="Helical" evidence="1">
    <location>
        <begin position="298"/>
        <end position="318"/>
    </location>
</feature>
<feature type="transmembrane region" description="Helical" evidence="1">
    <location>
        <begin position="353"/>
        <end position="373"/>
    </location>
</feature>
<feature type="transmembrane region" description="Helical" evidence="1">
    <location>
        <begin position="378"/>
        <end position="398"/>
    </location>
</feature>
<feature type="transmembrane region" description="Helical" evidence="1">
    <location>
        <begin position="422"/>
        <end position="442"/>
    </location>
</feature>
<feature type="transmembrane region" description="Helical" evidence="1">
    <location>
        <begin position="448"/>
        <end position="468"/>
    </location>
</feature>
<comment type="subcellular location">
    <subcellularLocation>
        <location evidence="2">Cell inner membrane</location>
        <topology evidence="2">Multi-pass membrane protein</topology>
    </subcellularLocation>
</comment>
<comment type="similarity">
    <text evidence="3">Belongs to the amino acid-polyamine-organocation (APC) superfamily. Amino acid transporter (AAT) (TC 2.A.3.1) family.</text>
</comment>
<sequence>MSKHDTDTSDQHAAKRRWLNAHEEGYHKAMGNRQVQMIAIGGAIGTGLFLGAGARLQMAGPALALVYLICGLFSFFILRALGELVLHRPSSGSFVSYAREFLGEKAAYVAGWMYFINWAMTGIVDITAVALYMHYWGAFGGVPQWVFALAALTIVGTMNMIGVKWFAEMEFWFALIKVLAIVTFLVVGTVFLGSGQPLDGNTTGFHLITDNGGFFPHGLLPALVLIQGVVFAFASIEMVGTAAGECKDPQTMVPKAINSVIWRIGLFYVGSVVLLVMLLPWSAYQAGQSPFVTFFSKLGVPYIGSIMNIVVLTAALSSLNSGLYCTGRILRSMAMGGSAPSFMAKMSRQHVPYAGILATLVVYVVGVFLNYLVPSRVFEIVLNFASLGIIASWAFIIVCQMRLRKAIKEGKAADVSFKLPGAPFTSWLTLLFLLSVLVLMAFDYPNGTYTIAALPIIGILLVIGWFGVRKRVAEIHSTAPVVEEDEEKQEIVFKPETAS</sequence>
<organism>
    <name type="scientific">Escherichia coli (strain K12)</name>
    <dbReference type="NCBI Taxonomy" id="83333"/>
    <lineage>
        <taxon>Bacteria</taxon>
        <taxon>Pseudomonadati</taxon>
        <taxon>Pseudomonadota</taxon>
        <taxon>Gammaproteobacteria</taxon>
        <taxon>Enterobacterales</taxon>
        <taxon>Enterobacteriaceae</taxon>
        <taxon>Escherichia</taxon>
    </lineage>
</organism>
<protein>
    <recommendedName>
        <fullName>L-asparagine permease</fullName>
    </recommendedName>
    <alternativeName>
        <fullName>L-asparagine transport protein</fullName>
    </alternativeName>
</protein>
<keyword id="KW-0029">Amino-acid transport</keyword>
<keyword id="KW-0997">Cell inner membrane</keyword>
<keyword id="KW-1003">Cell membrane</keyword>
<keyword id="KW-0472">Membrane</keyword>
<keyword id="KW-1185">Reference proteome</keyword>
<keyword id="KW-0812">Transmembrane</keyword>
<keyword id="KW-1133">Transmembrane helix</keyword>
<keyword id="KW-0813">Transport</keyword>
<name>ANSP_ECOLI</name>
<proteinExistence type="inferred from homology"/>
<reference key="1">
    <citation type="journal article" date="1996" name="DNA Res.">
        <title>A 570-kb DNA sequence of the Escherichia coli K-12 genome corresponding to the 28.0-40.1 min region on the linkage map.</title>
        <authorList>
            <person name="Aiba H."/>
            <person name="Baba T."/>
            <person name="Fujita K."/>
            <person name="Hayashi K."/>
            <person name="Inada T."/>
            <person name="Isono K."/>
            <person name="Itoh T."/>
            <person name="Kasai H."/>
            <person name="Kashimoto K."/>
            <person name="Kimura S."/>
            <person name="Kitakawa M."/>
            <person name="Kitagawa M."/>
            <person name="Makino K."/>
            <person name="Miki T."/>
            <person name="Mizobuchi K."/>
            <person name="Mori H."/>
            <person name="Mori T."/>
            <person name="Motomura K."/>
            <person name="Nakade S."/>
            <person name="Nakamura Y."/>
            <person name="Nashimoto H."/>
            <person name="Nishio Y."/>
            <person name="Oshima T."/>
            <person name="Saito N."/>
            <person name="Sampei G."/>
            <person name="Seki Y."/>
            <person name="Sivasundaram S."/>
            <person name="Tagami H."/>
            <person name="Takeda J."/>
            <person name="Takemoto K."/>
            <person name="Takeuchi Y."/>
            <person name="Wada C."/>
            <person name="Yamamoto Y."/>
            <person name="Horiuchi T."/>
        </authorList>
    </citation>
    <scope>NUCLEOTIDE SEQUENCE [LARGE SCALE GENOMIC DNA]</scope>
    <source>
        <strain>K12 / W3110 / ATCC 27325 / DSM 5911</strain>
    </source>
</reference>
<reference key="2">
    <citation type="journal article" date="1997" name="Science">
        <title>The complete genome sequence of Escherichia coli K-12.</title>
        <authorList>
            <person name="Blattner F.R."/>
            <person name="Plunkett G. III"/>
            <person name="Bloch C.A."/>
            <person name="Perna N.T."/>
            <person name="Burland V."/>
            <person name="Riley M."/>
            <person name="Collado-Vides J."/>
            <person name="Glasner J.D."/>
            <person name="Rode C.K."/>
            <person name="Mayhew G.F."/>
            <person name="Gregor J."/>
            <person name="Davis N.W."/>
            <person name="Kirkpatrick H.A."/>
            <person name="Goeden M.A."/>
            <person name="Rose D.J."/>
            <person name="Mau B."/>
            <person name="Shao Y."/>
        </authorList>
    </citation>
    <scope>NUCLEOTIDE SEQUENCE [LARGE SCALE GENOMIC DNA]</scope>
    <source>
        <strain>K12 / MG1655 / ATCC 47076</strain>
    </source>
</reference>
<reference key="3">
    <citation type="journal article" date="2006" name="Mol. Syst. Biol.">
        <title>Highly accurate genome sequences of Escherichia coli K-12 strains MG1655 and W3110.</title>
        <authorList>
            <person name="Hayashi K."/>
            <person name="Morooka N."/>
            <person name="Yamamoto Y."/>
            <person name="Fujita K."/>
            <person name="Isono K."/>
            <person name="Choi S."/>
            <person name="Ohtsubo E."/>
            <person name="Baba T."/>
            <person name="Wanner B.L."/>
            <person name="Mori H."/>
            <person name="Horiuchi T."/>
        </authorList>
    </citation>
    <scope>NUCLEOTIDE SEQUENCE [LARGE SCALE GENOMIC DNA]</scope>
    <source>
        <strain>K12 / W3110 / ATCC 27325 / DSM 5911</strain>
    </source>
</reference>
<reference key="4">
    <citation type="journal article" date="2005" name="Science">
        <title>Global topology analysis of the Escherichia coli inner membrane proteome.</title>
        <authorList>
            <person name="Daley D.O."/>
            <person name="Rapp M."/>
            <person name="Granseth E."/>
            <person name="Melen K."/>
            <person name="Drew D."/>
            <person name="von Heijne G."/>
        </authorList>
    </citation>
    <scope>SUBCELLULAR LOCATION</scope>
    <source>
        <strain>K12 / MG1655 / ATCC 47076</strain>
    </source>
</reference>